<sequence length="2845" mass="303100">MALGKVLAMALVLALAVLGSLSPGARAGDCKGQRQVLREAPGFVTDGAGNYSVNGNCEWLIEAPSPQHRILLDFLFLDTECTYDYLFVYDGDSPRGPLLASLSGSTRPPPIEASSGKMLLHLFSDANYNLLGFNASFRFSLCPGGCQSHGQCQPPGVCACEPGWGGPDCGLQECSAYCGSHGTCASPLGPCRCEPGFLGRACDLHLWENQGAGWWHNVSARDPAFSARIGAAGAFLSPPGLLAVFGGQDLNNALGDLVLYNFSANTWESWDLSPAPAARHSHVAVAWAGSLVLMGGELADGSLTNDVWAFSPLGRGHWELLAPPASSSSGPPGLAGHAAALVDDVWLYVSGGRTPHDLFSSGLFRFRLDSTSGGYWEQVIPAGGRPPAATGHSMVFHAPSRALLVHGGHRPSTARFSVRVNSTELFHVDRHVWTTLKGRDGLQGPRERAFHTASVLGNYMVVYGGNVHTHYQEEKCYEDGIFFYHLGCHQWVSGAELAPPGTPEGRAAPPSGRYSHVAAVLGGSVLLVAGGYSGRPRGDLMAYKVPPFVFQAPAPDYHLDYCSMYTDHSVCSRDPECSWCQGACQAAPPPGTPLGACPAASCLGLGRLLGDCQACLAFSSPTAPPRGPGTLGWCVHNESCLPRPEQARCRGEQISGTVGWWGPAPVFVTSLEACVTQSFLPGLHLLTFQQPPNTSQPDKVSIVRSTTITLTPSAETDVSLVYRGFIYPMLPGGPGGPGAEDVAVWTRAQRLHVLARMARGPDTENMEEVGRWVAHQEKETRRLQRPGSARLFPLPGRDHKYAVEIQGQLNGSAGPGHSELTLLWDRTGVPGGSEISFFFLEPYRSSSCTSYSSCLGCLADQGCGWCLTSATCHLRQGGAHCGDDGAGGSLLVLVPTLCPLCEEHRDCHACTQDPFCEWHQSTSRKGDAACSRRGRGRGALKSPEECPPLCSQRLTCEDCLANSSQCAWCQSTHTCFLFAAYLARYPHGGCRGWDDSVHSEPRCRSCDGFLTCHECLQSHECGWCGNEDNPTLGRCLQGDFSGPLGGGNCSLWVGEGLGLPVALPARWAYARCPDVDECRLGLARCHPRATCLNTPLSYECHCQRGYQGDGISHCNRTCLEDCGHGVCSGPPDFTCVCDLGWTSDLPPPTPAPGPPAPRCSRDCGCSFHSHCRKRGPGFCDECQDWTWGEHCERCRPGSFGNATGSRGCRPCQCNGHGDPRRGHCDNLSGLCFCQDHTEGAHCQLCSPGYYGDPRAGGSCFRECGGRALLTNVSSVALGSRRVGGLLPPGGGAARAGPGLSYCVWVVSATEELQPCAPGTLCPPLTLTFSPDSSTPCTLSYVLAFDGFPRFLDTGVVQSDRSLIAAFCGQRRDRPLTVQALSGLLVLHWEANGSSSWGFNASVGSARCGSGGPGSCPVPQECVPQDGAAGAGLCRCPQGWAGPHCRMALCPENCNAHTGAGTCNQSLGVCICAEGFGGPDCATKLDGGQLVWETLMDSRLSADTASRFLHRLGHTMVDGPDATLWMFGGLGLPQGLLGNLYRYSVSERRWTQMLAGAEDGGPGPSPRSFHAAAYVPAGRGAMYLLGGLTAGGVTRDFWVLNLTTLQWRQEKAPQTVELPAVAGHTLTARRGLSLLLVGGYSPENGFNQQLLEYQLATGTWVSGAQSGTPPTGLYGHSAVYHEATDSLYVFGGFRFHVELAAPSPELYSLHCPDRTWSLLAPSQGAKRDRMRNVRGSSRGLGQVPGEQPGSWGFREVRKKMALWAALAGTGGFLEEISPHLKEPRPRLFHASALLGDTMVVLGGRSDPDEFSSDVLLYQVNCNAWLLPDLTRSASVGPPMEESVAHAVAAVGSRLYISGGFGGVALGRLLALTLPPDPCRLLSSPEACNQSGACTWCHGACLSGDQAHRLGCGGSPCSPMPRSPEECRRLRTCSECLARHPRTLQPGDGEASTPRCKWCTNCPEGACIGRNGSCTSENDCRINQREVFWAGNCSEAACGAADCEQCTREGKCMWTRQFKRTGETRRILSVQPTYDWTCFSHSLLNVSPMPVESSPPLPCPTPCHLLPNCTSCLDSKGADGGWQHCVWSSSLQQCLSPSYLPLRCMAGGCGRLLRGPESCSLGCAQATQCALCLRRPHCGWCAWGGQDGGGRCMEGGLSGPRDGLTCGRPGASWAFLSCPPEDECANGHHDCNETQNCHDQPHGYECSCKTGYTMDNMTGLCRPVCAQGCVNGSCVEPDHCRCHFGFVGRNCSTECRCNRHSECAGVGARDHCLLCRNHTKGSHCEQCLPLFVGSAVGGGTCRPCHAFCRGNSHICISRKELQMSKGEPKKYSLDPEEIENWVTEGPSEDEAVCVNCQNNSYGEKCESCLQGYFLLDGKCTKCQCNGHADTCNEQDGTGCPCQNNTETGTCQGSSPSDRRDCYKYQCAKCRESFHGSPLGGQQCYRLISVEQECCLDPTSQTNCFHEPKRRALGPGRTVLFGVQPKFTNVDIRLTLDVTFGAVDLYVSTSYDTFVVRVAPDTGVHTVHIQPPPAPPPPPPPADGGPRGAGDPGGAGASSGPGAPAEPRVREVWPRGLITYVTVTEPSAVLVVRGVRDRLVITYPHEHHALKSSRFYLLLLGVGDPSGPGANGSADSQGLLFFRQDQAHIDLFVFFSVFFSCFFLFLSLCVLLWKAKQALDQRQEQRRHLQEMTKMASRPFAKVTVCFPPDPTAPASAWKPAGLPPPAFRRSEPFLAPLLLTGAGGPWGPMGGGCCPPAIPATTAGLRAGPITLEPTEDGMAGVATLLLQLPGGPHAPNGACLGSALVTLRHRLHEYCGGGGGAGGSGHGTGAGRKGLLSQDNLTSMSL</sequence>
<keyword id="KW-0025">Alternative splicing</keyword>
<keyword id="KW-0106">Calcium</keyword>
<keyword id="KW-0989">Craniosynostosis</keyword>
<keyword id="KW-0225">Disease variant</keyword>
<keyword id="KW-1015">Disulfide bond</keyword>
<keyword id="KW-0245">EGF-like domain</keyword>
<keyword id="KW-0325">Glycoprotein</keyword>
<keyword id="KW-0880">Kelch repeat</keyword>
<keyword id="KW-0424">Laminin EGF-like domain</keyword>
<keyword id="KW-0472">Membrane</keyword>
<keyword id="KW-0597">Phosphoprotein</keyword>
<keyword id="KW-1267">Proteomics identification</keyword>
<keyword id="KW-1185">Reference proteome</keyword>
<keyword id="KW-0677">Repeat</keyword>
<keyword id="KW-0732">Signal</keyword>
<keyword id="KW-0812">Transmembrane</keyword>
<keyword id="KW-1133">Transmembrane helix</keyword>
<dbReference type="EMBL" id="AB011541">
    <property type="protein sequence ID" value="BAA32469.2"/>
    <property type="status" value="ALT_INIT"/>
    <property type="molecule type" value="mRNA"/>
</dbReference>
<dbReference type="EMBL" id="AC011497">
    <property type="status" value="NOT_ANNOTATED_CDS"/>
    <property type="molecule type" value="Genomic_DNA"/>
</dbReference>
<dbReference type="EMBL" id="AC024078">
    <property type="status" value="NOT_ANNOTATED_CDS"/>
    <property type="molecule type" value="Genomic_DNA"/>
</dbReference>
<dbReference type="EMBL" id="BC153880">
    <property type="protein sequence ID" value="AAI53881.1"/>
    <property type="molecule type" value="mRNA"/>
</dbReference>
<dbReference type="EMBL" id="AY280362">
    <property type="protein sequence ID" value="AAP35084.1"/>
    <property type="status" value="ALT_INIT"/>
    <property type="molecule type" value="mRNA"/>
</dbReference>
<dbReference type="CCDS" id="CCDS12604.2">
    <molecule id="Q7Z7M0-2"/>
</dbReference>
<dbReference type="CCDS" id="CCDS62693.1">
    <molecule id="Q7Z7M0-1"/>
</dbReference>
<dbReference type="PIR" id="T00209">
    <property type="entry name" value="T00209"/>
</dbReference>
<dbReference type="RefSeq" id="NP_001258867.1">
    <molecule id="Q7Z7M0-1"/>
    <property type="nucleotide sequence ID" value="NM_001271938.2"/>
</dbReference>
<dbReference type="RefSeq" id="NP_001401.2">
    <molecule id="Q7Z7M0-2"/>
    <property type="nucleotide sequence ID" value="NM_001410.3"/>
</dbReference>
<dbReference type="SMR" id="Q7Z7M0"/>
<dbReference type="BioGRID" id="108274">
    <property type="interactions" value="84"/>
</dbReference>
<dbReference type="FunCoup" id="Q7Z7M0">
    <property type="interactions" value="969"/>
</dbReference>
<dbReference type="IntAct" id="Q7Z7M0">
    <property type="interactions" value="43"/>
</dbReference>
<dbReference type="MINT" id="Q7Z7M0"/>
<dbReference type="STRING" id="9606.ENSP00000251268"/>
<dbReference type="GlyConnect" id="1959">
    <property type="glycosylation" value="13 N-Linked glycans (5 sites)"/>
</dbReference>
<dbReference type="GlyCosmos" id="Q7Z7M0">
    <property type="glycosylation" value="11 sites, 15 glycans"/>
</dbReference>
<dbReference type="GlyGen" id="Q7Z7M0">
    <property type="glycosylation" value="20 sites, 23 N-linked glycans (15 sites), 1 O-linked glycan (1 site)"/>
</dbReference>
<dbReference type="iPTMnet" id="Q7Z7M0"/>
<dbReference type="PhosphoSitePlus" id="Q7Z7M0"/>
<dbReference type="BioMuta" id="MEGF8"/>
<dbReference type="DMDM" id="218511690"/>
<dbReference type="jPOST" id="Q7Z7M0"/>
<dbReference type="MassIVE" id="Q7Z7M0"/>
<dbReference type="PaxDb" id="9606-ENSP00000251268"/>
<dbReference type="PeptideAtlas" id="Q7Z7M0"/>
<dbReference type="ProteomicsDB" id="69567">
    <molecule id="Q7Z7M0-1"/>
</dbReference>
<dbReference type="ProteomicsDB" id="69568">
    <molecule id="Q7Z7M0-2"/>
</dbReference>
<dbReference type="Antibodypedia" id="58360">
    <property type="antibodies" value="105 antibodies from 22 providers"/>
</dbReference>
<dbReference type="DNASU" id="1954"/>
<dbReference type="Ensembl" id="ENST00000251268.11">
    <molecule id="Q7Z7M0-1"/>
    <property type="protein sequence ID" value="ENSP00000251268.5"/>
    <property type="gene ID" value="ENSG00000105429.13"/>
</dbReference>
<dbReference type="Ensembl" id="ENST00000334370.8">
    <molecule id="Q7Z7M0-2"/>
    <property type="protein sequence ID" value="ENSP00000334219.4"/>
    <property type="gene ID" value="ENSG00000105429.13"/>
</dbReference>
<dbReference type="GeneID" id="1954"/>
<dbReference type="KEGG" id="hsa:1954"/>
<dbReference type="MANE-Select" id="ENST00000251268.11">
    <property type="protein sequence ID" value="ENSP00000251268.5"/>
    <property type="RefSeq nucleotide sequence ID" value="NM_001271938.2"/>
    <property type="RefSeq protein sequence ID" value="NP_001258867.1"/>
</dbReference>
<dbReference type="UCSC" id="uc002otl.4">
    <molecule id="Q7Z7M0-1"/>
    <property type="organism name" value="human"/>
</dbReference>
<dbReference type="AGR" id="HGNC:3233"/>
<dbReference type="CTD" id="1954"/>
<dbReference type="DisGeNET" id="1954"/>
<dbReference type="GeneCards" id="MEGF8"/>
<dbReference type="HGNC" id="HGNC:3233">
    <property type="gene designation" value="MEGF8"/>
</dbReference>
<dbReference type="HPA" id="ENSG00000105429">
    <property type="expression patterns" value="Low tissue specificity"/>
</dbReference>
<dbReference type="MalaCards" id="MEGF8"/>
<dbReference type="MIM" id="604267">
    <property type="type" value="gene"/>
</dbReference>
<dbReference type="MIM" id="614976">
    <property type="type" value="phenotype"/>
</dbReference>
<dbReference type="neXtProt" id="NX_Q7Z7M0"/>
<dbReference type="OpenTargets" id="ENSG00000105429"/>
<dbReference type="Orphanet" id="65759">
    <property type="disease" value="Carpenter syndrome"/>
</dbReference>
<dbReference type="PharmGKB" id="PA27666"/>
<dbReference type="VEuPathDB" id="HostDB:ENSG00000105429"/>
<dbReference type="eggNOG" id="KOG1388">
    <property type="taxonomic scope" value="Eukaryota"/>
</dbReference>
<dbReference type="GeneTree" id="ENSGT00940000160262"/>
<dbReference type="HOGENOM" id="CLU_000612_0_0_1"/>
<dbReference type="InParanoid" id="Q7Z7M0"/>
<dbReference type="OMA" id="PVCQWCD"/>
<dbReference type="OrthoDB" id="263283at2759"/>
<dbReference type="PAN-GO" id="Q7Z7M0">
    <property type="GO annotations" value="2 GO annotations based on evolutionary models"/>
</dbReference>
<dbReference type="PhylomeDB" id="Q7Z7M0"/>
<dbReference type="TreeFam" id="TF321873"/>
<dbReference type="PathwayCommons" id="Q7Z7M0"/>
<dbReference type="SignaLink" id="Q7Z7M0"/>
<dbReference type="BioGRID-ORCS" id="1954">
    <property type="hits" value="13 hits in 1160 CRISPR screens"/>
</dbReference>
<dbReference type="ChiTaRS" id="MEGF8">
    <property type="organism name" value="human"/>
</dbReference>
<dbReference type="GenomeRNAi" id="1954"/>
<dbReference type="Pharos" id="Q7Z7M0">
    <property type="development level" value="Tbio"/>
</dbReference>
<dbReference type="PRO" id="PR:Q7Z7M0"/>
<dbReference type="Proteomes" id="UP000005640">
    <property type="component" value="Chromosome 19"/>
</dbReference>
<dbReference type="RNAct" id="Q7Z7M0">
    <property type="molecule type" value="protein"/>
</dbReference>
<dbReference type="Bgee" id="ENSG00000105429">
    <property type="expression patterns" value="Expressed in cortical plate and 176 other cell types or tissues"/>
</dbReference>
<dbReference type="ExpressionAtlas" id="Q7Z7M0">
    <property type="expression patterns" value="baseline and differential"/>
</dbReference>
<dbReference type="GO" id="GO:0070062">
    <property type="term" value="C:extracellular exosome"/>
    <property type="evidence" value="ECO:0007005"/>
    <property type="project" value="UniProtKB"/>
</dbReference>
<dbReference type="GO" id="GO:0016020">
    <property type="term" value="C:membrane"/>
    <property type="evidence" value="ECO:0007669"/>
    <property type="project" value="UniProtKB-SubCell"/>
</dbReference>
<dbReference type="GO" id="GO:0005634">
    <property type="term" value="C:nucleus"/>
    <property type="evidence" value="ECO:0000250"/>
    <property type="project" value="UniProtKB"/>
</dbReference>
<dbReference type="GO" id="GO:0000151">
    <property type="term" value="C:ubiquitin ligase complex"/>
    <property type="evidence" value="ECO:0007669"/>
    <property type="project" value="Ensembl"/>
</dbReference>
<dbReference type="GO" id="GO:0005509">
    <property type="term" value="F:calcium ion binding"/>
    <property type="evidence" value="ECO:0007669"/>
    <property type="project" value="InterPro"/>
</dbReference>
<dbReference type="GO" id="GO:0035904">
    <property type="term" value="P:aorta development"/>
    <property type="evidence" value="ECO:0007669"/>
    <property type="project" value="Ensembl"/>
</dbReference>
<dbReference type="GO" id="GO:0030509">
    <property type="term" value="P:BMP signaling pathway"/>
    <property type="evidence" value="ECO:0000250"/>
    <property type="project" value="CAFA"/>
</dbReference>
<dbReference type="GO" id="GO:0042074">
    <property type="term" value="P:cell migration involved in gastrulation"/>
    <property type="evidence" value="ECO:0000315"/>
    <property type="project" value="UniProtKB"/>
</dbReference>
<dbReference type="GO" id="GO:0060976">
    <property type="term" value="P:coronary vasculature development"/>
    <property type="evidence" value="ECO:0007669"/>
    <property type="project" value="Ensembl"/>
</dbReference>
<dbReference type="GO" id="GO:0097094">
    <property type="term" value="P:craniofacial suture morphogenesis"/>
    <property type="evidence" value="ECO:0000315"/>
    <property type="project" value="UniProtKB"/>
</dbReference>
<dbReference type="GO" id="GO:0071907">
    <property type="term" value="P:determination of digestive tract left/right asymmetry"/>
    <property type="evidence" value="ECO:0000250"/>
    <property type="project" value="UniProtKB"/>
</dbReference>
<dbReference type="GO" id="GO:0061371">
    <property type="term" value="P:determination of heart left/right asymmetry"/>
    <property type="evidence" value="ECO:0000315"/>
    <property type="project" value="UniProtKB"/>
</dbReference>
<dbReference type="GO" id="GO:1990403">
    <property type="term" value="P:embryonic brain development"/>
    <property type="evidence" value="ECO:0007669"/>
    <property type="project" value="Ensembl"/>
</dbReference>
<dbReference type="GO" id="GO:0042733">
    <property type="term" value="P:embryonic digit morphogenesis"/>
    <property type="evidence" value="ECO:0007669"/>
    <property type="project" value="Ensembl"/>
</dbReference>
<dbReference type="GO" id="GO:0060971">
    <property type="term" value="P:embryonic heart tube left/right pattern formation"/>
    <property type="evidence" value="ECO:0000250"/>
    <property type="project" value="CAFA"/>
</dbReference>
<dbReference type="GO" id="GO:0003143">
    <property type="term" value="P:embryonic heart tube morphogenesis"/>
    <property type="evidence" value="ECO:0000250"/>
    <property type="project" value="CAFA"/>
</dbReference>
<dbReference type="GO" id="GO:0030326">
    <property type="term" value="P:embryonic limb morphogenesis"/>
    <property type="evidence" value="ECO:0000250"/>
    <property type="project" value="CAFA"/>
</dbReference>
<dbReference type="GO" id="GO:0048704">
    <property type="term" value="P:embryonic skeletal system morphogenesis"/>
    <property type="evidence" value="ECO:0000250"/>
    <property type="project" value="CAFA"/>
</dbReference>
<dbReference type="GO" id="GO:0055113">
    <property type="term" value="P:epiboly involved in gastrulation with mouth forming second"/>
    <property type="evidence" value="ECO:0000315"/>
    <property type="project" value="UniProtKB"/>
</dbReference>
<dbReference type="GO" id="GO:0097155">
    <property type="term" value="P:fasciculation of sensory neuron axon"/>
    <property type="evidence" value="ECO:0000250"/>
    <property type="project" value="CAFA"/>
</dbReference>
<dbReference type="GO" id="GO:0060972">
    <property type="term" value="P:left/right pattern formation"/>
    <property type="evidence" value="ECO:0000315"/>
    <property type="project" value="UniProtKB"/>
</dbReference>
<dbReference type="GO" id="GO:0035108">
    <property type="term" value="P:limb morphogenesis"/>
    <property type="evidence" value="ECO:0000315"/>
    <property type="project" value="UniProtKB"/>
</dbReference>
<dbReference type="GO" id="GO:0045879">
    <property type="term" value="P:negative regulation of smoothened signaling pathway"/>
    <property type="evidence" value="ECO:0000250"/>
    <property type="project" value="UniProtKB"/>
</dbReference>
<dbReference type="GO" id="GO:0061626">
    <property type="term" value="P:pharyngeal arch artery morphogenesis"/>
    <property type="evidence" value="ECO:0007669"/>
    <property type="project" value="Ensembl"/>
</dbReference>
<dbReference type="GO" id="GO:0048842">
    <property type="term" value="P:positive regulation of axon extension involved in axon guidance"/>
    <property type="evidence" value="ECO:0000250"/>
    <property type="project" value="CAFA"/>
</dbReference>
<dbReference type="GO" id="GO:0016567">
    <property type="term" value="P:protein ubiquitination"/>
    <property type="evidence" value="ECO:0007669"/>
    <property type="project" value="Ensembl"/>
</dbReference>
<dbReference type="GO" id="GO:0065003">
    <property type="term" value="P:protein-containing complex assembly"/>
    <property type="evidence" value="ECO:0007669"/>
    <property type="project" value="Ensembl"/>
</dbReference>
<dbReference type="GO" id="GO:0010468">
    <property type="term" value="P:regulation of gene expression"/>
    <property type="evidence" value="ECO:0000250"/>
    <property type="project" value="CAFA"/>
</dbReference>
<dbReference type="GO" id="GO:0007224">
    <property type="term" value="P:smoothened signaling pathway"/>
    <property type="evidence" value="ECO:0007669"/>
    <property type="project" value="Ensembl"/>
</dbReference>
<dbReference type="CDD" id="cd00041">
    <property type="entry name" value="CUB"/>
    <property type="match status" value="1"/>
</dbReference>
<dbReference type="CDD" id="cd00054">
    <property type="entry name" value="EGF_CA"/>
    <property type="match status" value="2"/>
</dbReference>
<dbReference type="CDD" id="cd00055">
    <property type="entry name" value="EGF_Lam"/>
    <property type="match status" value="2"/>
</dbReference>
<dbReference type="FunFam" id="2.120.10.80:FF:000075">
    <property type="entry name" value="Multiple EGF like domains 8"/>
    <property type="match status" value="1"/>
</dbReference>
<dbReference type="FunFam" id="2.120.10.80:FF:000081">
    <property type="entry name" value="Multiple EGF like domains 8"/>
    <property type="match status" value="1"/>
</dbReference>
<dbReference type="FunFam" id="2.10.25.10:FF:000191">
    <property type="entry name" value="Multiple epidermal growth factor-like domains 8"/>
    <property type="match status" value="1"/>
</dbReference>
<dbReference type="FunFam" id="2.10.25.10:FF:000202">
    <property type="entry name" value="Multiple epidermal growth factor-like domains 8"/>
    <property type="match status" value="1"/>
</dbReference>
<dbReference type="FunFam" id="2.10.25.10:FF:000207">
    <property type="entry name" value="Multiple epidermal growth factor-like domains 8"/>
    <property type="match status" value="1"/>
</dbReference>
<dbReference type="FunFam" id="2.10.25.10:FF:000214">
    <property type="entry name" value="Multiple epidermal growth factor-like domains 8"/>
    <property type="match status" value="1"/>
</dbReference>
<dbReference type="FunFam" id="2.10.25.10:FF:000331">
    <property type="entry name" value="Multiple epidermal growth factor-like domains 8"/>
    <property type="match status" value="1"/>
</dbReference>
<dbReference type="FunFam" id="2.10.25.10:FF:000532">
    <property type="entry name" value="Multiple epidermal growth factor-like domains 8"/>
    <property type="match status" value="1"/>
</dbReference>
<dbReference type="FunFam" id="2.120.10.80:FF:000030">
    <property type="entry name" value="Multiple epidermal growth factor-like domains 8"/>
    <property type="match status" value="1"/>
</dbReference>
<dbReference type="FunFam" id="2.120.10.80:FF:000033">
    <property type="entry name" value="Multiple epidermal growth factor-like domains 8"/>
    <property type="match status" value="1"/>
</dbReference>
<dbReference type="FunFam" id="2.120.10.80:FF:000052">
    <property type="entry name" value="Multiple epidermal growth factor-like domains 8"/>
    <property type="match status" value="1"/>
</dbReference>
<dbReference type="FunFam" id="2.60.120.290:FF:000023">
    <property type="entry name" value="Multiple epidermal growth factor-like domains 8"/>
    <property type="match status" value="1"/>
</dbReference>
<dbReference type="Gene3D" id="2.120.10.80">
    <property type="entry name" value="Kelch-type beta propeller"/>
    <property type="match status" value="5"/>
</dbReference>
<dbReference type="Gene3D" id="2.10.25.10">
    <property type="entry name" value="Laminin"/>
    <property type="match status" value="8"/>
</dbReference>
<dbReference type="Gene3D" id="2.60.120.290">
    <property type="entry name" value="Spermadhesin, CUB domain"/>
    <property type="match status" value="1"/>
</dbReference>
<dbReference type="InterPro" id="IPR056737">
    <property type="entry name" value="Beta-prop_ATRN-MKLN-like"/>
</dbReference>
<dbReference type="InterPro" id="IPR000859">
    <property type="entry name" value="CUB_dom"/>
</dbReference>
<dbReference type="InterPro" id="IPR001881">
    <property type="entry name" value="EGF-like_Ca-bd_dom"/>
</dbReference>
<dbReference type="InterPro" id="IPR000742">
    <property type="entry name" value="EGF-like_dom"/>
</dbReference>
<dbReference type="InterPro" id="IPR000152">
    <property type="entry name" value="EGF-type_Asp/Asn_hydroxyl_site"/>
</dbReference>
<dbReference type="InterPro" id="IPR018097">
    <property type="entry name" value="EGF_Ca-bd_CS"/>
</dbReference>
<dbReference type="InterPro" id="IPR024731">
    <property type="entry name" value="EGF_dom"/>
</dbReference>
<dbReference type="InterPro" id="IPR015915">
    <property type="entry name" value="Kelch-typ_b-propeller"/>
</dbReference>
<dbReference type="InterPro" id="IPR002049">
    <property type="entry name" value="LE_dom"/>
</dbReference>
<dbReference type="InterPro" id="IPR056863">
    <property type="entry name" value="LMN_ATRN_NET-like_EGF"/>
</dbReference>
<dbReference type="InterPro" id="IPR049883">
    <property type="entry name" value="NOTCH1_EGF-like"/>
</dbReference>
<dbReference type="InterPro" id="IPR002165">
    <property type="entry name" value="Plexin_repeat"/>
</dbReference>
<dbReference type="InterPro" id="IPR016201">
    <property type="entry name" value="PSI"/>
</dbReference>
<dbReference type="InterPro" id="IPR035914">
    <property type="entry name" value="Sperma_CUB_dom_sf"/>
</dbReference>
<dbReference type="PANTHER" id="PTHR46093">
    <property type="entry name" value="ACYL-COA-BINDING DOMAIN-CONTAINING PROTEIN 5"/>
    <property type="match status" value="1"/>
</dbReference>
<dbReference type="PANTHER" id="PTHR46093:SF18">
    <property type="entry name" value="FIBRONECTIN TYPE-III DOMAIN-CONTAINING PROTEIN"/>
    <property type="match status" value="1"/>
</dbReference>
<dbReference type="Pfam" id="PF24981">
    <property type="entry name" value="Beta-prop_ATRN-LZTR1"/>
    <property type="match status" value="2"/>
</dbReference>
<dbReference type="Pfam" id="PF00431">
    <property type="entry name" value="CUB"/>
    <property type="match status" value="1"/>
</dbReference>
<dbReference type="Pfam" id="PF12947">
    <property type="entry name" value="EGF_3"/>
    <property type="match status" value="1"/>
</dbReference>
<dbReference type="Pfam" id="PF07645">
    <property type="entry name" value="EGF_CA"/>
    <property type="match status" value="1"/>
</dbReference>
<dbReference type="Pfam" id="PF00053">
    <property type="entry name" value="EGF_laminin"/>
    <property type="match status" value="1"/>
</dbReference>
<dbReference type="Pfam" id="PF24973">
    <property type="entry name" value="EGF_LMN_ATRN"/>
    <property type="match status" value="3"/>
</dbReference>
<dbReference type="Pfam" id="PF01437">
    <property type="entry name" value="PSI"/>
    <property type="match status" value="1"/>
</dbReference>
<dbReference type="SMART" id="SM00042">
    <property type="entry name" value="CUB"/>
    <property type="match status" value="1"/>
</dbReference>
<dbReference type="SMART" id="SM00181">
    <property type="entry name" value="EGF"/>
    <property type="match status" value="13"/>
</dbReference>
<dbReference type="SMART" id="SM00179">
    <property type="entry name" value="EGF_CA"/>
    <property type="match status" value="2"/>
</dbReference>
<dbReference type="SMART" id="SM00180">
    <property type="entry name" value="EGF_Lam"/>
    <property type="match status" value="4"/>
</dbReference>
<dbReference type="SMART" id="SM00423">
    <property type="entry name" value="PSI"/>
    <property type="match status" value="9"/>
</dbReference>
<dbReference type="SUPFAM" id="SSF57196">
    <property type="entry name" value="EGF/Laminin"/>
    <property type="match status" value="3"/>
</dbReference>
<dbReference type="SUPFAM" id="SSF117281">
    <property type="entry name" value="Kelch motif"/>
    <property type="match status" value="3"/>
</dbReference>
<dbReference type="SUPFAM" id="SSF49854">
    <property type="entry name" value="Spermadhesin, CUB domain"/>
    <property type="match status" value="1"/>
</dbReference>
<dbReference type="PROSITE" id="PS00010">
    <property type="entry name" value="ASX_HYDROXYL"/>
    <property type="match status" value="2"/>
</dbReference>
<dbReference type="PROSITE" id="PS01180">
    <property type="entry name" value="CUB"/>
    <property type="match status" value="2"/>
</dbReference>
<dbReference type="PROSITE" id="PS00022">
    <property type="entry name" value="EGF_1"/>
    <property type="match status" value="6"/>
</dbReference>
<dbReference type="PROSITE" id="PS01186">
    <property type="entry name" value="EGF_2"/>
    <property type="match status" value="7"/>
</dbReference>
<dbReference type="PROSITE" id="PS50026">
    <property type="entry name" value="EGF_3"/>
    <property type="match status" value="4"/>
</dbReference>
<dbReference type="PROSITE" id="PS01187">
    <property type="entry name" value="EGF_CA"/>
    <property type="match status" value="1"/>
</dbReference>
<dbReference type="PROSITE" id="PS01248">
    <property type="entry name" value="EGF_LAM_1"/>
    <property type="match status" value="4"/>
</dbReference>
<dbReference type="PROSITE" id="PS50027">
    <property type="entry name" value="EGF_LAM_2"/>
    <property type="match status" value="4"/>
</dbReference>
<protein>
    <recommendedName>
        <fullName>Multiple epidermal growth factor-like domains protein 8</fullName>
        <shortName>Multiple EGF-like domains protein 8</shortName>
    </recommendedName>
    <alternativeName>
        <fullName>Epidermal growth factor-like protein 4</fullName>
        <shortName>EGF-like protein 4</shortName>
    </alternativeName>
</protein>
<name>MEGF8_HUMAN</name>
<feature type="signal peptide" evidence="4">
    <location>
        <begin position="1"/>
        <end position="27"/>
    </location>
</feature>
<feature type="chain" id="PRO_0000055629" description="Multiple epidermal growth factor-like domains protein 8">
    <location>
        <begin position="28"/>
        <end position="2845"/>
    </location>
</feature>
<feature type="topological domain" description="Extracellular" evidence="4">
    <location>
        <begin position="28"/>
        <end position="2647"/>
    </location>
</feature>
<feature type="transmembrane region" description="Helical" evidence="4">
    <location>
        <begin position="2648"/>
        <end position="2668"/>
    </location>
</feature>
<feature type="topological domain" description="Cytoplasmic" evidence="4">
    <location>
        <begin position="2669"/>
        <end position="2845"/>
    </location>
</feature>
<feature type="domain" description="CUB 1" evidence="5">
    <location>
        <begin position="30"/>
        <end position="140"/>
    </location>
</feature>
<feature type="domain" description="EGF-like 1" evidence="6">
    <location>
        <begin position="138"/>
        <end position="168"/>
    </location>
</feature>
<feature type="domain" description="EGF-like 2" evidence="6">
    <location>
        <begin position="170"/>
        <end position="203"/>
    </location>
</feature>
<feature type="repeat" description="Kelch 1">
    <location>
        <begin position="241"/>
        <end position="287"/>
    </location>
</feature>
<feature type="repeat" description="Kelch 2">
    <location>
        <begin position="290"/>
        <end position="338"/>
    </location>
</feature>
<feature type="repeat" description="Kelch 3">
    <location>
        <begin position="346"/>
        <end position="399"/>
    </location>
</feature>
<feature type="repeat" description="Kelch 4">
    <location>
        <begin position="402"/>
        <end position="453"/>
    </location>
</feature>
<feature type="repeat" description="Kelch 5">
    <location>
        <begin position="459"/>
        <end position="511"/>
    </location>
</feature>
<feature type="repeat" description="Kelch 6">
    <location>
        <begin position="525"/>
        <end position="575"/>
    </location>
</feature>
<feature type="domain" description="PSI 1">
    <location>
        <begin position="561"/>
        <end position="613"/>
    </location>
</feature>
<feature type="domain" description="PSI 2">
    <location>
        <begin position="847"/>
        <end position="899"/>
    </location>
</feature>
<feature type="domain" description="PSI 3">
    <location>
        <begin position="900"/>
        <end position="947"/>
    </location>
</feature>
<feature type="domain" description="EGF-like 3; calcium-binding" evidence="6">
    <location>
        <begin position="1074"/>
        <end position="1115"/>
    </location>
</feature>
<feature type="domain" description="Laminin EGF-like 1" evidence="7">
    <location>
        <begin position="1163"/>
        <end position="1210"/>
    </location>
</feature>
<feature type="domain" description="Laminin EGF-like 2" evidence="7">
    <location>
        <begin position="1211"/>
        <end position="1261"/>
    </location>
</feature>
<feature type="domain" description="CUB 2" evidence="5">
    <location>
        <begin position="1263"/>
        <end position="1405"/>
    </location>
</feature>
<feature type="domain" description="EGF-like 4" evidence="6">
    <location>
        <begin position="1403"/>
        <end position="1445"/>
    </location>
</feature>
<feature type="repeat" description="Kelch 7">
    <location>
        <begin position="1522"/>
        <end position="1570"/>
    </location>
</feature>
<feature type="repeat" description="Kelch 8">
    <location>
        <begin position="1580"/>
        <end position="1626"/>
    </location>
</feature>
<feature type="repeat" description="Kelch 9">
    <location>
        <begin position="1632"/>
        <end position="1679"/>
    </location>
</feature>
<feature type="repeat" description="Kelch 10">
    <location>
        <begin position="1685"/>
        <end position="1735"/>
    </location>
</feature>
<feature type="repeat" description="Kelch 11">
    <location>
        <begin position="1796"/>
        <end position="1843"/>
    </location>
</feature>
<feature type="repeat" description="Kelch 12">
    <location>
        <begin position="1852"/>
        <end position="1898"/>
    </location>
</feature>
<feature type="domain" description="PSI 4">
    <location>
        <begin position="1876"/>
        <end position="1916"/>
    </location>
</feature>
<feature type="domain" description="PSI 5">
    <location>
        <begin position="1924"/>
        <end position="1979"/>
    </location>
</feature>
<feature type="domain" description="PSI 6">
    <location>
        <begin position="2060"/>
        <end position="2118"/>
    </location>
</feature>
<feature type="domain" description="PSI 7">
    <location>
        <begin position="2120"/>
        <end position="2177"/>
    </location>
</feature>
<feature type="domain" description="EGF-like 5" evidence="6">
    <location>
        <begin position="2178"/>
        <end position="2216"/>
    </location>
</feature>
<feature type="domain" description="Laminin EGF-like 3" evidence="7">
    <location>
        <begin position="2253"/>
        <end position="2301"/>
    </location>
</feature>
<feature type="domain" description="Laminin EGF-like 4" evidence="7">
    <location>
        <begin position="2380"/>
        <end position="2443"/>
    </location>
</feature>
<feature type="region of interest" description="Disordered" evidence="8">
    <location>
        <begin position="1726"/>
        <end position="1745"/>
    </location>
</feature>
<feature type="region of interest" description="Disordered" evidence="8">
    <location>
        <begin position="2523"/>
        <end position="2564"/>
    </location>
</feature>
<feature type="region of interest" description="Disordered" evidence="8">
    <location>
        <begin position="2817"/>
        <end position="2845"/>
    </location>
</feature>
<feature type="compositionally biased region" description="Pro residues" evidence="8">
    <location>
        <begin position="2527"/>
        <end position="2540"/>
    </location>
</feature>
<feature type="compositionally biased region" description="Gly residues" evidence="8">
    <location>
        <begin position="2542"/>
        <end position="2556"/>
    </location>
</feature>
<feature type="compositionally biased region" description="Gly residues" evidence="8">
    <location>
        <begin position="2817"/>
        <end position="2831"/>
    </location>
</feature>
<feature type="compositionally biased region" description="Polar residues" evidence="8">
    <location>
        <begin position="2836"/>
        <end position="2845"/>
    </location>
</feature>
<feature type="modified residue" description="Phosphothreonine" evidence="3">
    <location>
        <position position="1353"/>
    </location>
</feature>
<feature type="glycosylation site" description="N-linked (GlcNAc...) asparagine" evidence="4">
    <location>
        <position position="50"/>
    </location>
</feature>
<feature type="glycosylation site" description="N-linked (GlcNAc...) asparagine" evidence="4">
    <location>
        <position position="217"/>
    </location>
</feature>
<feature type="glycosylation site" description="N-linked (GlcNAc...) asparagine" evidence="4">
    <location>
        <position position="1048"/>
    </location>
</feature>
<feature type="glycosylation site" description="N-linked (GlcNAc...) asparagine" evidence="9">
    <location>
        <position position="1271"/>
    </location>
</feature>
<feature type="glycosylation site" description="N-linked (GlcNAc...) asparagine" evidence="4">
    <location>
        <position position="2066"/>
    </location>
</feature>
<feature type="glycosylation site" description="N-linked (GlcNAc...) asparagine" evidence="4">
    <location>
        <position position="2229"/>
    </location>
</feature>
<feature type="disulfide bond" evidence="1">
    <location>
        <begin position="30"/>
        <end position="57"/>
    </location>
</feature>
<feature type="disulfide bond" evidence="1">
    <location>
        <begin position="142"/>
        <end position="152"/>
    </location>
</feature>
<feature type="disulfide bond" evidence="1">
    <location>
        <begin position="146"/>
        <end position="158"/>
    </location>
</feature>
<feature type="disulfide bond" evidence="1">
    <location>
        <begin position="174"/>
        <end position="184"/>
    </location>
</feature>
<feature type="disulfide bond" evidence="1">
    <location>
        <begin position="178"/>
        <end position="191"/>
    </location>
</feature>
<feature type="disulfide bond" evidence="1">
    <location>
        <begin position="193"/>
        <end position="202"/>
    </location>
</feature>
<feature type="disulfide bond" evidence="1">
    <location>
        <begin position="1078"/>
        <end position="1091"/>
    </location>
</feature>
<feature type="disulfide bond" evidence="1">
    <location>
        <begin position="1085"/>
        <end position="1100"/>
    </location>
</feature>
<feature type="disulfide bond" evidence="1">
    <location>
        <begin position="1102"/>
        <end position="1114"/>
    </location>
</feature>
<feature type="disulfide bond" evidence="1">
    <location>
        <begin position="1163"/>
        <end position="1171"/>
    </location>
</feature>
<feature type="disulfide bond" evidence="1">
    <location>
        <begin position="1165"/>
        <end position="1179"/>
    </location>
</feature>
<feature type="disulfide bond" evidence="1">
    <location>
        <begin position="1182"/>
        <end position="1191"/>
    </location>
</feature>
<feature type="disulfide bond" evidence="1">
    <location>
        <begin position="1194"/>
        <end position="1208"/>
    </location>
</feature>
<feature type="disulfide bond" evidence="1">
    <location>
        <begin position="1211"/>
        <end position="1224"/>
    </location>
</feature>
<feature type="disulfide bond" evidence="1">
    <location>
        <begin position="1213"/>
        <end position="1231"/>
    </location>
</feature>
<feature type="disulfide bond" evidence="1">
    <location>
        <begin position="1233"/>
        <end position="1242"/>
    </location>
</feature>
<feature type="disulfide bond" evidence="1">
    <location>
        <begin position="1245"/>
        <end position="1259"/>
    </location>
</feature>
<feature type="disulfide bond" evidence="1">
    <location>
        <begin position="1263"/>
        <end position="1302"/>
    </location>
</feature>
<feature type="disulfide bond" evidence="1">
    <location>
        <begin position="1336"/>
        <end position="1367"/>
    </location>
</feature>
<feature type="disulfide bond" evidence="1">
    <location>
        <begin position="1407"/>
        <end position="1421"/>
    </location>
</feature>
<feature type="disulfide bond" evidence="1">
    <location>
        <begin position="1415"/>
        <end position="1433"/>
    </location>
</feature>
<feature type="disulfide bond" evidence="1">
    <location>
        <begin position="1435"/>
        <end position="1444"/>
    </location>
</feature>
<feature type="disulfide bond" evidence="1">
    <location>
        <begin position="2182"/>
        <end position="2195"/>
    </location>
</feature>
<feature type="disulfide bond" evidence="1">
    <location>
        <begin position="2189"/>
        <end position="2204"/>
    </location>
</feature>
<feature type="disulfide bond" evidence="1">
    <location>
        <begin position="2253"/>
        <end position="2261"/>
    </location>
</feature>
<feature type="disulfide bond" evidence="1">
    <location>
        <begin position="2255"/>
        <end position="2270"/>
    </location>
</feature>
<feature type="disulfide bond" evidence="1">
    <location>
        <begin position="2273"/>
        <end position="2282"/>
    </location>
</feature>
<feature type="disulfide bond" evidence="1">
    <location>
        <begin position="2285"/>
        <end position="2299"/>
    </location>
</feature>
<feature type="disulfide bond" evidence="1">
    <location>
        <begin position="2380"/>
        <end position="2389"/>
    </location>
</feature>
<feature type="disulfide bond" evidence="1">
    <location>
        <begin position="2382"/>
        <end position="2397"/>
    </location>
</feature>
<feature type="disulfide bond" evidence="1">
    <location>
        <begin position="2399"/>
        <end position="2424"/>
    </location>
</feature>
<feature type="disulfide bond" evidence="1">
    <location>
        <begin position="2427"/>
        <end position="2441"/>
    </location>
</feature>
<feature type="splice variant" id="VSP_036067" description="In isoform 2." evidence="11 12">
    <location>
        <begin position="700"/>
        <end position="766"/>
    </location>
</feature>
<feature type="sequence variant" id="VAR_069305" description="In CRPT2; dbSNP:rs2147448693." evidence="10">
    <original>G</original>
    <variation>R</variation>
    <location>
        <position position="199"/>
    </location>
</feature>
<feature type="sequence variant" id="VAR_069306" description="In CRPT2; dbSNP:rs397515427." evidence="10">
    <original>R</original>
    <variation>H</variation>
    <location>
        <position position="1566"/>
    </location>
</feature>
<feature type="sequence variant" id="VAR_069307" description="In CRPT2; dbSNP:rs397515428." evidence="10">
    <original>S</original>
    <variation>G</variation>
    <location>
        <position position="2434"/>
    </location>
</feature>
<proteinExistence type="evidence at protein level"/>
<accession>Q7Z7M0</accession>
<accession>A8KAY0</accession>
<accession>O75097</accession>
<evidence type="ECO:0000250" key="1"/>
<evidence type="ECO:0000250" key="2">
    <source>
        <dbReference type="UniProtKB" id="P60882"/>
    </source>
</evidence>
<evidence type="ECO:0000250" key="3">
    <source>
        <dbReference type="UniProtKB" id="Q9QYP0"/>
    </source>
</evidence>
<evidence type="ECO:0000255" key="4"/>
<evidence type="ECO:0000255" key="5">
    <source>
        <dbReference type="PROSITE-ProRule" id="PRU00059"/>
    </source>
</evidence>
<evidence type="ECO:0000255" key="6">
    <source>
        <dbReference type="PROSITE-ProRule" id="PRU00076"/>
    </source>
</evidence>
<evidence type="ECO:0000255" key="7">
    <source>
        <dbReference type="PROSITE-ProRule" id="PRU00460"/>
    </source>
</evidence>
<evidence type="ECO:0000256" key="8">
    <source>
        <dbReference type="SAM" id="MobiDB-lite"/>
    </source>
</evidence>
<evidence type="ECO:0000269" key="9">
    <source>
    </source>
</evidence>
<evidence type="ECO:0000269" key="10">
    <source>
    </source>
</evidence>
<evidence type="ECO:0000303" key="11">
    <source>
    </source>
</evidence>
<evidence type="ECO:0000303" key="12">
    <source>
    </source>
</evidence>
<evidence type="ECO:0000305" key="13"/>
<organism>
    <name type="scientific">Homo sapiens</name>
    <name type="common">Human</name>
    <dbReference type="NCBI Taxonomy" id="9606"/>
    <lineage>
        <taxon>Eukaryota</taxon>
        <taxon>Metazoa</taxon>
        <taxon>Chordata</taxon>
        <taxon>Craniata</taxon>
        <taxon>Vertebrata</taxon>
        <taxon>Euteleostomi</taxon>
        <taxon>Mammalia</taxon>
        <taxon>Eutheria</taxon>
        <taxon>Euarchontoglires</taxon>
        <taxon>Primates</taxon>
        <taxon>Haplorrhini</taxon>
        <taxon>Catarrhini</taxon>
        <taxon>Hominidae</taxon>
        <taxon>Homo</taxon>
    </lineage>
</organism>
<comment type="function">
    <text evidence="2">Acts as a negative regulator of hedgehog signaling.</text>
</comment>
<comment type="interaction">
    <interactant intactId="EBI-947617">
        <id>Q7Z7M0</id>
    </interactant>
    <interactant intactId="EBI-708350">
        <id>O15265</id>
        <label>ATXN7</label>
    </interactant>
    <organismsDiffer>false</organismsDiffer>
    <experiments>2</experiments>
</comment>
<comment type="interaction">
    <interactant intactId="EBI-947617">
        <id>Q7Z7M0</id>
    </interactant>
    <interactant intactId="EBI-766279">
        <id>O00555</id>
        <label>CACNA1A</label>
    </interactant>
    <organismsDiffer>false</organismsDiffer>
    <experiments>2</experiments>
</comment>
<comment type="subcellular location">
    <subcellularLocation>
        <location evidence="13">Membrane</location>
        <topology evidence="13">Single-pass type I membrane protein</topology>
    </subcellularLocation>
</comment>
<comment type="alternative products">
    <event type="alternative splicing"/>
    <isoform>
        <id>Q7Z7M0-1</id>
        <name>1</name>
        <sequence type="displayed"/>
    </isoform>
    <isoform>
        <id>Q7Z7M0-2</id>
        <name>2</name>
        <sequence type="described" ref="VSP_036067"/>
    </isoform>
</comment>
<comment type="disease" evidence="10">
    <disease id="DI-03635">
        <name>Carpenter syndrome 2</name>
        <acronym>CRPT2</acronym>
        <description>An autosomal recessive multiple congenital malformation disorder characterized by multisuture craniosynostosis and polysyndactyly of the hands and feet, in association with abnormal left-right patterning and other features, most commonly obesity, umbilical hernia, cryptorchidism, and congenital heart disease.</description>
        <dbReference type="MIM" id="614976"/>
    </disease>
    <text>The disease is caused by variants affecting the gene represented in this entry.</text>
</comment>
<comment type="sequence caution" evidence="13">
    <conflict type="erroneous initiation">
        <sequence resource="EMBL-CDS" id="AAP35084"/>
    </conflict>
    <text>Extended N-terminus.</text>
</comment>
<comment type="sequence caution" evidence="13">
    <conflict type="erroneous initiation">
        <sequence resource="EMBL-CDS" id="BAA32469"/>
    </conflict>
    <text>Truncated N-terminus.</text>
</comment>
<reference key="1">
    <citation type="journal article" date="1998" name="Genomics">
        <title>Identification of high-molecular-weight proteins with multiple EGF-like motifs by motif-trap screening.</title>
        <authorList>
            <person name="Nakayama M."/>
            <person name="Nakajima D."/>
            <person name="Nagase T."/>
            <person name="Nomura N."/>
            <person name="Seki N."/>
            <person name="Ohara O."/>
        </authorList>
    </citation>
    <scope>NUCLEOTIDE SEQUENCE [MRNA] (ISOFORM 2)</scope>
    <source>
        <tissue>Brain</tissue>
    </source>
</reference>
<reference key="2">
    <citation type="submission" date="2005-02" db="EMBL/GenBank/DDBJ databases">
        <authorList>
            <person name="Nakayama M."/>
            <person name="Nakajima D."/>
            <person name="Nagase T."/>
            <person name="Nomura N."/>
            <person name="Seki N."/>
            <person name="Ohara O."/>
        </authorList>
    </citation>
    <scope>SEQUENCE REVISION</scope>
</reference>
<reference key="3">
    <citation type="journal article" date="2004" name="Nature">
        <title>The DNA sequence and biology of human chromosome 19.</title>
        <authorList>
            <person name="Grimwood J."/>
            <person name="Gordon L.A."/>
            <person name="Olsen A.S."/>
            <person name="Terry A."/>
            <person name="Schmutz J."/>
            <person name="Lamerdin J.E."/>
            <person name="Hellsten U."/>
            <person name="Goodstein D."/>
            <person name="Couronne O."/>
            <person name="Tran-Gyamfi M."/>
            <person name="Aerts A."/>
            <person name="Altherr M."/>
            <person name="Ashworth L."/>
            <person name="Bajorek E."/>
            <person name="Black S."/>
            <person name="Branscomb E."/>
            <person name="Caenepeel S."/>
            <person name="Carrano A.V."/>
            <person name="Caoile C."/>
            <person name="Chan Y.M."/>
            <person name="Christensen M."/>
            <person name="Cleland C.A."/>
            <person name="Copeland A."/>
            <person name="Dalin E."/>
            <person name="Dehal P."/>
            <person name="Denys M."/>
            <person name="Detter J.C."/>
            <person name="Escobar J."/>
            <person name="Flowers D."/>
            <person name="Fotopulos D."/>
            <person name="Garcia C."/>
            <person name="Georgescu A.M."/>
            <person name="Glavina T."/>
            <person name="Gomez M."/>
            <person name="Gonzales E."/>
            <person name="Groza M."/>
            <person name="Hammon N."/>
            <person name="Hawkins T."/>
            <person name="Haydu L."/>
            <person name="Ho I."/>
            <person name="Huang W."/>
            <person name="Israni S."/>
            <person name="Jett J."/>
            <person name="Kadner K."/>
            <person name="Kimball H."/>
            <person name="Kobayashi A."/>
            <person name="Larionov V."/>
            <person name="Leem S.-H."/>
            <person name="Lopez F."/>
            <person name="Lou Y."/>
            <person name="Lowry S."/>
            <person name="Malfatti S."/>
            <person name="Martinez D."/>
            <person name="McCready P.M."/>
            <person name="Medina C."/>
            <person name="Morgan J."/>
            <person name="Nelson K."/>
            <person name="Nolan M."/>
            <person name="Ovcharenko I."/>
            <person name="Pitluck S."/>
            <person name="Pollard M."/>
            <person name="Popkie A.P."/>
            <person name="Predki P."/>
            <person name="Quan G."/>
            <person name="Ramirez L."/>
            <person name="Rash S."/>
            <person name="Retterer J."/>
            <person name="Rodriguez A."/>
            <person name="Rogers S."/>
            <person name="Salamov A."/>
            <person name="Salazar A."/>
            <person name="She X."/>
            <person name="Smith D."/>
            <person name="Slezak T."/>
            <person name="Solovyev V."/>
            <person name="Thayer N."/>
            <person name="Tice H."/>
            <person name="Tsai M."/>
            <person name="Ustaszewska A."/>
            <person name="Vo N."/>
            <person name="Wagner M."/>
            <person name="Wheeler J."/>
            <person name="Wu K."/>
            <person name="Xie G."/>
            <person name="Yang J."/>
            <person name="Dubchak I."/>
            <person name="Furey T.S."/>
            <person name="DeJong P."/>
            <person name="Dickson M."/>
            <person name="Gordon D."/>
            <person name="Eichler E.E."/>
            <person name="Pennacchio L.A."/>
            <person name="Richardson P."/>
            <person name="Stubbs L."/>
            <person name="Rokhsar D.S."/>
            <person name="Myers R.M."/>
            <person name="Rubin E.M."/>
            <person name="Lucas S.M."/>
        </authorList>
    </citation>
    <scope>NUCLEOTIDE SEQUENCE [LARGE SCALE GENOMIC DNA]</scope>
</reference>
<reference key="4">
    <citation type="journal article" date="2004" name="Genome Res.">
        <title>The status, quality, and expansion of the NIH full-length cDNA project: the Mammalian Gene Collection (MGC).</title>
        <authorList>
            <consortium name="The MGC Project Team"/>
        </authorList>
    </citation>
    <scope>NUCLEOTIDE SEQUENCE [LARGE SCALE MRNA] (ISOFORM 2)</scope>
</reference>
<reference key="5">
    <citation type="submission" date="2003-04" db="EMBL/GenBank/DDBJ databases">
        <title>Cloning, characterization and location of a novel human gene containing an EGF domain.</title>
        <authorList>
            <person name="Shan Y.X."/>
            <person name="Yu L."/>
        </authorList>
    </citation>
    <scope>NUCLEOTIDE SEQUENCE [MRNA] OF 416-2845 (ISOFORM 1)</scope>
</reference>
<reference key="6">
    <citation type="journal article" date="2005" name="J. Proteome Res.">
        <title>Human plasma N-glycoproteome analysis by immunoaffinity subtraction, hydrazide chemistry, and mass spectrometry.</title>
        <authorList>
            <person name="Liu T."/>
            <person name="Qian W.-J."/>
            <person name="Gritsenko M.A."/>
            <person name="Camp D.G. II"/>
            <person name="Monroe M.E."/>
            <person name="Moore R.J."/>
            <person name="Smith R.D."/>
        </authorList>
    </citation>
    <scope>GLYCOSYLATION [LARGE SCALE ANALYSIS] AT ASN-1271</scope>
    <source>
        <tissue>Plasma</tissue>
    </source>
</reference>
<reference key="7">
    <citation type="journal article" date="2012" name="Am. J. Hum. Genet.">
        <title>Mutations in multidomain protein MEGF8 identify a Carpenter syndrome subtype associated with defective lateralization.</title>
        <authorList>
            <person name="Twigg S.R."/>
            <person name="Lloyd D."/>
            <person name="Jenkins D."/>
            <person name="Elcioglu N.E."/>
            <person name="Cooper C.D."/>
            <person name="Al-Sannaa N."/>
            <person name="Annagur A."/>
            <person name="Gillessen-Kaesbach G."/>
            <person name="Huning I."/>
            <person name="Knight S.J."/>
            <person name="Goodship J.A."/>
            <person name="Keavney B.D."/>
            <person name="Beales P.L."/>
            <person name="Gileadi O."/>
            <person name="McGowan S.J."/>
            <person name="Wilkie A.O."/>
        </authorList>
    </citation>
    <scope>VARIANTS CRPT2 ARG-199; HIS-1566 AND GLY-2434</scope>
</reference>
<gene>
    <name type="primary">MEGF8</name>
    <name type="synonym">C19orf49</name>
    <name type="synonym">EGFL4</name>
    <name type="synonym">KIAA0817</name>
</gene>